<proteinExistence type="evidence at transcript level"/>
<dbReference type="EC" id="3.2.1.18" evidence="1"/>
<dbReference type="EMBL" id="J02177">
    <property type="protein sequence ID" value="AAA43397.1"/>
    <property type="status" value="ALT_SEQ"/>
    <property type="molecule type" value="Genomic_RNA"/>
</dbReference>
<dbReference type="EMBL" id="L25815">
    <property type="protein sequence ID" value="AAA91326.1"/>
    <property type="molecule type" value="mRNA"/>
</dbReference>
<dbReference type="EMBL" id="L25816">
    <property type="protein sequence ID" value="AAA91327.1"/>
    <property type="molecule type" value="mRNA"/>
</dbReference>
<dbReference type="EMBL" id="L25817">
    <property type="protein sequence ID" value="AAA91328.1"/>
    <property type="molecule type" value="mRNA"/>
</dbReference>
<dbReference type="SMR" id="P03470"/>
<dbReference type="BindingDB" id="P03470"/>
<dbReference type="ChEMBL" id="CHEMBL1287610"/>
<dbReference type="DrugCentral" id="P03470"/>
<dbReference type="CAZy" id="GH34">
    <property type="family name" value="Glycoside Hydrolase Family 34"/>
</dbReference>
<dbReference type="GlyCosmos" id="P03470">
    <property type="glycosylation" value="4 sites, No reported glycans"/>
</dbReference>
<dbReference type="PRO" id="PR:P03470"/>
<dbReference type="Proteomes" id="UP000000834">
    <property type="component" value="Genome"/>
</dbReference>
<dbReference type="GO" id="GO:0020002">
    <property type="term" value="C:host cell plasma membrane"/>
    <property type="evidence" value="ECO:0007669"/>
    <property type="project" value="UniProtKB-SubCell"/>
</dbReference>
<dbReference type="GO" id="GO:0016020">
    <property type="term" value="C:membrane"/>
    <property type="evidence" value="ECO:0007669"/>
    <property type="project" value="UniProtKB-UniRule"/>
</dbReference>
<dbReference type="GO" id="GO:0055036">
    <property type="term" value="C:virion membrane"/>
    <property type="evidence" value="ECO:0007669"/>
    <property type="project" value="UniProtKB-SubCell"/>
</dbReference>
<dbReference type="GO" id="GO:0004308">
    <property type="term" value="F:exo-alpha-sialidase activity"/>
    <property type="evidence" value="ECO:0007669"/>
    <property type="project" value="UniProtKB-UniRule"/>
</dbReference>
<dbReference type="GO" id="GO:0046872">
    <property type="term" value="F:metal ion binding"/>
    <property type="evidence" value="ECO:0007669"/>
    <property type="project" value="UniProtKB-UniRule"/>
</dbReference>
<dbReference type="GO" id="GO:0005975">
    <property type="term" value="P:carbohydrate metabolic process"/>
    <property type="evidence" value="ECO:0007669"/>
    <property type="project" value="InterPro"/>
</dbReference>
<dbReference type="GO" id="GO:0046761">
    <property type="term" value="P:viral budding from plasma membrane"/>
    <property type="evidence" value="ECO:0007669"/>
    <property type="project" value="UniProtKB-UniRule"/>
</dbReference>
<dbReference type="CDD" id="cd15483">
    <property type="entry name" value="Influenza_NA"/>
    <property type="match status" value="1"/>
</dbReference>
<dbReference type="FunFam" id="2.120.10.10:FF:000001">
    <property type="entry name" value="Neuraminidase"/>
    <property type="match status" value="1"/>
</dbReference>
<dbReference type="Gene3D" id="2.120.10.10">
    <property type="match status" value="1"/>
</dbReference>
<dbReference type="HAMAP" id="MF_04071">
    <property type="entry name" value="INFV_NRAM"/>
    <property type="match status" value="1"/>
</dbReference>
<dbReference type="InterPro" id="IPR001860">
    <property type="entry name" value="Glyco_hydro_34"/>
</dbReference>
<dbReference type="InterPro" id="IPR033654">
    <property type="entry name" value="Sialidase_Influenza_A/B"/>
</dbReference>
<dbReference type="InterPro" id="IPR036278">
    <property type="entry name" value="Sialidase_sf"/>
</dbReference>
<dbReference type="Pfam" id="PF00064">
    <property type="entry name" value="Neur"/>
    <property type="match status" value="1"/>
</dbReference>
<dbReference type="SUPFAM" id="SSF50939">
    <property type="entry name" value="Sialidases"/>
    <property type="match status" value="1"/>
</dbReference>
<organism>
    <name type="scientific">Influenza A virus (strain A/Wilson-Smith/1933 H1N1)</name>
    <name type="common">Influenza A virus (strain A/WS/1933 H1N1)</name>
    <dbReference type="NCBI Taxonomy" id="381518"/>
    <lineage>
        <taxon>Viruses</taxon>
        <taxon>Riboviria</taxon>
        <taxon>Orthornavirae</taxon>
        <taxon>Negarnaviricota</taxon>
        <taxon>Polyploviricotina</taxon>
        <taxon>Insthoviricetes</taxon>
        <taxon>Articulavirales</taxon>
        <taxon>Orthomyxoviridae</taxon>
        <taxon>Alphainfluenzavirus</taxon>
        <taxon>Alphainfluenzavirus influenzae</taxon>
        <taxon>Influenza A virus</taxon>
    </lineage>
</organism>
<keyword id="KW-0106">Calcium</keyword>
<keyword id="KW-1015">Disulfide bond</keyword>
<keyword id="KW-0325">Glycoprotein</keyword>
<keyword id="KW-0326">Glycosidase</keyword>
<keyword id="KW-1032">Host cell membrane</keyword>
<keyword id="KW-1043">Host membrane</keyword>
<keyword id="KW-0378">Hydrolase</keyword>
<keyword id="KW-0472">Membrane</keyword>
<keyword id="KW-0479">Metal-binding</keyword>
<keyword id="KW-0735">Signal-anchor</keyword>
<keyword id="KW-0812">Transmembrane</keyword>
<keyword id="KW-1133">Transmembrane helix</keyword>
<keyword id="KW-0946">Virion</keyword>
<accession>P03470</accession>
<accession>Q67215</accession>
<accession>Q67216</accession>
<accession>Q67217</accession>
<reference key="1">
    <citation type="journal article" date="1982" name="J. Virol.">
        <title>Complete nucleotide sequence of the neuraminidase gene of human influenza virus A/WSN/33.</title>
        <authorList>
            <person name="Hiti A.L."/>
            <person name="Nayak D.P."/>
        </authorList>
    </citation>
    <scope>NUCLEOTIDE SEQUENCE [GENOMIC RNA]</scope>
    <source>
        <strain>A/WSN/33</strain>
    </source>
</reference>
<reference key="2">
    <citation type="journal article" date="1995" name="Virus Genes">
        <title>Changes in the neuraminidase of neurovirulent influenza virus strains.</title>
        <authorList>
            <person name="Ward A.C."/>
        </authorList>
    </citation>
    <scope>NUCLEOTIDE SEQUENCE [MRNA]</scope>
    <source>
        <strain>A/NWS/33</strain>
        <strain>A/WS/33</strain>
        <strain>A/WSN/33</strain>
    </source>
</reference>
<reference key="3">
    <citation type="journal article" date="2000" name="J. Virol.">
        <title>Analysis of the transmembrane domain of influenza virus neuraminidase, a type II transmembrane glycoprotein, for apical sorting and raft association.</title>
        <authorList>
            <person name="Barman S."/>
            <person name="Nayak D.P."/>
        </authorList>
    </citation>
    <scope>SUBCELLULAR LOCATION</scope>
</reference>
<reference key="4">
    <citation type="journal article" date="2005" name="J. Virol.">
        <title>Sialidase activity of influenza A virus in an endocytic pathway enhances viral replication.</title>
        <authorList>
            <person name="Suzuki T."/>
            <person name="Takahashi T."/>
            <person name="Guo C.T."/>
            <person name="Hidari K.I."/>
            <person name="Miyamoto D."/>
            <person name="Goto H."/>
            <person name="Kawaoka Y."/>
            <person name="Suzuki Y."/>
        </authorList>
    </citation>
    <scope>FUNCTION</scope>
    <source>
        <strain>A/WSN/33</strain>
    </source>
</reference>
<reference key="5">
    <citation type="journal article" date="2004" name="Virus Res.">
        <title>Assembly and budding of influenza virus.</title>
        <authorList>
            <person name="Nayak D.P."/>
            <person name="Hui E.K."/>
            <person name="Barman S."/>
        </authorList>
    </citation>
    <scope>REVIEW</scope>
</reference>
<reference key="6">
    <citation type="journal article" date="2005" name="N. Engl. J. Med.">
        <title>Neuraminidase inhibitors for influenza.</title>
        <authorList>
            <person name="Moscona A."/>
        </authorList>
    </citation>
    <scope>REVIEW</scope>
</reference>
<reference key="7">
    <citation type="journal article" date="2005" name="Biol. Pharm. Bull.">
        <title>Sialobiology of influenza: molecular mechanism of host range variation of influenza viruses.</title>
        <authorList>
            <person name="Suzuki Y."/>
        </authorList>
    </citation>
    <scope>REVIEW</scope>
</reference>
<organismHost>
    <name type="scientific">Aves</name>
    <dbReference type="NCBI Taxonomy" id="8782"/>
</organismHost>
<organismHost>
    <name type="scientific">Homo sapiens</name>
    <name type="common">Human</name>
    <dbReference type="NCBI Taxonomy" id="9606"/>
</organismHost>
<organismHost>
    <name type="scientific">Sus scrofa</name>
    <name type="common">Pig</name>
    <dbReference type="NCBI Taxonomy" id="9823"/>
</organismHost>
<gene>
    <name evidence="1" type="primary">NA</name>
</gene>
<name>NRAM_I33A0</name>
<sequence length="453" mass="49687">MNPNQKIITIGSICMVVGIISLILQIGNIISIWISHSIQTGNQNHTGICNQGIITYNVVAGQDSTSVILTGNSSLCPIRGWAIHSKDNGIRIGSKGDVFVIREPFISCSHLECRTFFLTQGALLNDKHSNGTVKDRSPYRALMSCPVGEAPSPYNSRFESVAWSASACHDGMGWLTIGISGPDNGAVAVLKYNGIITETIKSWRKKILRTQESECTCVNGSCFTIMTDGPSNGLASYKIFKIEKGKVTKSIELNAPNSHYEECSCYPDTGKVMCVCRDNWHGSNRPWVSFDQNLDYQIGYICSGVFGDNPRPKDGPGSCGPVSADGANGVKGFSYRYGNGVWIGRTKSDSSRHGFEMIWDPNGWTETDSRFSVRQDVVAMTDRSGYSGSFVQHPELTGLDCMRPCFWVELIRGRPEEETIWTSGSIISFCGVNSDTVDWSWPDGAELPFTIDK</sequence>
<protein>
    <recommendedName>
        <fullName evidence="1">Neuraminidase</fullName>
        <ecNumber evidence="1">3.2.1.18</ecNumber>
    </recommendedName>
</protein>
<evidence type="ECO:0000255" key="1">
    <source>
        <dbReference type="HAMAP-Rule" id="MF_04071"/>
    </source>
</evidence>
<evidence type="ECO:0000269" key="2">
    <source>
    </source>
</evidence>
<evidence type="ECO:0000269" key="3">
    <source>
    </source>
</evidence>
<comment type="function">
    <text evidence="3">Unlike other strains, A/WSN/33 neuraminidase binds and activates plasminogen into plasmin in the vicinity of HA so that activated plasmin cleaves HA rendering the virus infectious.</text>
</comment>
<comment type="function">
    <text evidence="1 3">Catalyzes the removal of terminal sialic acid residues from viral and cellular glycoconjugates. Cleaves off the terminal sialic acids on the glycosylated HA during virus budding to facilitate virus release. Additionally helps virus spread through the circulation by further removing sialic acids from the cell surface. These cleavages prevent self-aggregation and ensure the efficient spread of the progeny virus from cell to cell. Otherwise, infection would be limited to one round of replication. Described as a receptor-destroying enzyme because it cleaves a terminal sialic acid from the cellular receptors. May facilitate viral invasion of the upper airways by cleaving the sialic acid moieties on the mucin of the airway epithelial cells. Likely to plays a role in the budding process through its association with lipid rafts during intracellular transport. May additionally display a raft-association independent effect on budding. Plays a role in the determination of host range restriction on replication and virulence. Sialidase activity in late endosome/lysosome traffic seems to enhance virus replication.</text>
</comment>
<comment type="catalytic activity">
    <reaction evidence="1">
        <text>Hydrolysis of alpha-(2-&gt;3)-, alpha-(2-&gt;6)-, alpha-(2-&gt;8)- glycosidic linkages of terminal sialic acid residues in oligosaccharides, glycoproteins, glycolipids, colominic acid and synthetic substrates.</text>
        <dbReference type="EC" id="3.2.1.18"/>
    </reaction>
</comment>
<comment type="cofactor">
    <cofactor evidence="1">
        <name>Ca(2+)</name>
        <dbReference type="ChEBI" id="CHEBI:29108"/>
    </cofactor>
</comment>
<comment type="activity regulation">
    <text evidence="1">Inhibited by the neuraminidase inhibitors zanamivir (Relenza) and oseltamivir (Tamiflu). These drugs interfere with the release of progeny virus from infected cells and are effective against all influenza strains. Resistance to neuraminidase inhibitors is quite rare.</text>
</comment>
<comment type="subunit">
    <text evidence="1">Homotetramer.</text>
</comment>
<comment type="subcellular location">
    <subcellularLocation>
        <location evidence="1 2">Virion membrane</location>
    </subcellularLocation>
    <subcellularLocation>
        <location evidence="1 2">Host apical cell membrane</location>
        <topology evidence="1 2">Single-pass type II membrane protein</topology>
    </subcellularLocation>
    <text evidence="1">Preferentially accumulates at the apical plasma membrane in infected polarized epithelial cells, which is the virus assembly site. Uses lipid rafts for cell surface transport and apical sorting. In the virion, forms a mushroom-shaped spike on the surface of the membrane.</text>
</comment>
<comment type="domain">
    <text evidence="1">Intact N-terminus is essential for virion morphogenesis. Possesses two apical sorting signals, one in the ectodomain, which is likely to be a glycan, and the other in the transmembrane domain. The transmembrane domain also plays a role in lipid raft association.</text>
</comment>
<comment type="PTM">
    <text evidence="1">N-glycosylated.</text>
</comment>
<comment type="miscellaneous">
    <text>The influenza A genome consist of 8 RNA segments. Genetic variation of hemagglutinin and/or neuraminidase genes results in the emergence of new influenza strains. The mechanism of variation can be the result of point mutations or the result of genetic reassortment between segments of two different strains.</text>
</comment>
<comment type="similarity">
    <text evidence="1">Belongs to the glycosyl hydrolase 34 family.</text>
</comment>
<feature type="chain" id="PRO_0000078726" description="Neuraminidase">
    <location>
        <begin position="1"/>
        <end position="453"/>
    </location>
</feature>
<feature type="topological domain" description="Intravirion" evidence="1">
    <location>
        <begin position="1"/>
        <end position="6"/>
    </location>
</feature>
<feature type="transmembrane region" description="Helical" evidence="1">
    <location>
        <begin position="7"/>
        <end position="27"/>
    </location>
</feature>
<feature type="topological domain" description="Virion surface" evidence="1">
    <location>
        <begin position="28"/>
        <end position="453"/>
    </location>
</feature>
<feature type="region of interest" description="Involved in apical transport and lipid raft association" evidence="1">
    <location>
        <begin position="11"/>
        <end position="33"/>
    </location>
</feature>
<feature type="region of interest" description="Hypervariable stalk region" evidence="1">
    <location>
        <begin position="36"/>
        <end position="74"/>
    </location>
</feature>
<feature type="region of interest" description="Head of neuraminidase" evidence="1">
    <location>
        <begin position="75"/>
        <end position="453"/>
    </location>
</feature>
<feature type="active site" description="Proton donor/acceptor" evidence="1">
    <location>
        <position position="135"/>
    </location>
</feature>
<feature type="active site" description="Nucleophile" evidence="1">
    <location>
        <position position="386"/>
    </location>
</feature>
<feature type="binding site" evidence="1">
    <location>
        <position position="102"/>
    </location>
    <ligand>
        <name>substrate</name>
    </ligand>
</feature>
<feature type="binding site" evidence="1">
    <location>
        <position position="136"/>
    </location>
    <ligand>
        <name>substrate</name>
    </ligand>
</feature>
<feature type="binding site" evidence="1">
    <location>
        <begin position="261"/>
        <end position="262"/>
    </location>
    <ligand>
        <name>substrate</name>
    </ligand>
</feature>
<feature type="binding site" evidence="1">
    <location>
        <position position="277"/>
    </location>
    <ligand>
        <name>substrate</name>
    </ligand>
</feature>
<feature type="binding site" evidence="1">
    <location>
        <position position="278"/>
    </location>
    <ligand>
        <name>Ca(2+)</name>
        <dbReference type="ChEBI" id="CHEBI:29108"/>
    </ligand>
</feature>
<feature type="binding site" evidence="1">
    <location>
        <position position="282"/>
    </location>
    <ligand>
        <name>Ca(2+)</name>
        <dbReference type="ChEBI" id="CHEBI:29108"/>
    </ligand>
</feature>
<feature type="binding site" evidence="1">
    <location>
        <position position="308"/>
    </location>
    <ligand>
        <name>Ca(2+)</name>
        <dbReference type="ChEBI" id="CHEBI:29108"/>
    </ligand>
</feature>
<feature type="binding site" evidence="1">
    <location>
        <position position="328"/>
    </location>
    <ligand>
        <name>Ca(2+)</name>
        <dbReference type="ChEBI" id="CHEBI:29108"/>
    </ligand>
</feature>
<feature type="binding site" evidence="1">
    <location>
        <position position="352"/>
    </location>
    <ligand>
        <name>substrate</name>
    </ligand>
</feature>
<feature type="glycosylation site" description="N-linked (GlcNAc...) asparagine; by host" evidence="1">
    <location>
        <position position="44"/>
    </location>
</feature>
<feature type="glycosylation site" description="N-linked (GlcNAc...) asparagine; by host" evidence="1">
    <location>
        <position position="72"/>
    </location>
</feature>
<feature type="glycosylation site" description="N-linked (GlcNAc...) asparagine; by host" evidence="1">
    <location>
        <position position="130"/>
    </location>
</feature>
<feature type="glycosylation site" description="N-linked (GlcNAc...) asparagine; by host" evidence="1">
    <location>
        <position position="219"/>
    </location>
</feature>
<feature type="disulfide bond" evidence="1">
    <location>
        <begin position="76"/>
        <end position="401"/>
    </location>
</feature>
<feature type="disulfide bond" evidence="1">
    <location>
        <begin position="108"/>
        <end position="113"/>
    </location>
</feature>
<feature type="disulfide bond" evidence="1">
    <location>
        <begin position="168"/>
        <end position="215"/>
    </location>
</feature>
<feature type="disulfide bond" evidence="1">
    <location>
        <begin position="217"/>
        <end position="222"/>
    </location>
</feature>
<feature type="disulfide bond" evidence="1">
    <location>
        <begin position="263"/>
        <end position="276"/>
    </location>
</feature>
<feature type="disulfide bond" evidence="1">
    <location>
        <begin position="265"/>
        <end position="274"/>
    </location>
</feature>
<feature type="disulfide bond" evidence="1">
    <location>
        <begin position="302"/>
        <end position="319"/>
    </location>
</feature>
<feature type="disulfide bond" evidence="1">
    <location>
        <begin position="405"/>
        <end position="430"/>
    </location>
</feature>
<feature type="sequence variant" description="In strain: A/WSN/33.">
    <original>I</original>
    <variation>S</variation>
    <location>
        <position position="53"/>
    </location>
</feature>
<feature type="sequence variant" description="In strain: A/NWS/33.">
    <original>YN</original>
    <variation>HK</variation>
    <location>
        <begin position="56"/>
        <end position="57"/>
    </location>
</feature>
<feature type="sequence variant" description="In strain: A/WSN/33.">
    <original>N</original>
    <variation>K</variation>
    <location>
        <position position="57"/>
    </location>
</feature>
<feature type="sequence variant" description="In strain: A/WSN/33.">
    <original>N</original>
    <variation>R</variation>
    <location>
        <position position="130"/>
    </location>
</feature>
<feature type="sequence variant" description="In strain: A/NWS/33.">
    <original>N</original>
    <variation>Y</variation>
    <location>
        <position position="130"/>
    </location>
</feature>
<feature type="sequence variant" description="In strain: A/WSN/33.">
    <original>V</original>
    <variation>F</variation>
    <location>
        <position position="133"/>
    </location>
</feature>
<feature type="sequence variant" description="In strain: A/NWS/33.">
    <original>V</original>
    <variation>S</variation>
    <location>
        <position position="133"/>
    </location>
</feature>
<feature type="sequence variant" description="In strain: A/WSN/33.">
    <original>N</original>
    <variation>D</variation>
    <location>
        <position position="184"/>
    </location>
</feature>
<feature type="sequence variant" description="In strain: A/WSN/33.">
    <original>K</original>
    <variation>N</variation>
    <location>
        <position position="206"/>
    </location>
</feature>
<feature type="sequence variant" description="In strain: A/WSN/33 and A/NWS/33.">
    <original>N</original>
    <variation>D</variation>
    <location>
        <position position="232"/>
    </location>
</feature>
<feature type="sequence variant" description="In strain: A/WSN/33.">
    <original>Q</original>
    <variation>K</variation>
    <location>
        <position position="297"/>
    </location>
</feature>
<feature type="sequence variant" description="In strain: A/WSN/33 and A/NWS/33.">
    <original>P</original>
    <variation>T</variation>
    <location>
        <position position="316"/>
    </location>
</feature>
<feature type="sequence variant" description="In strain: A/WSN/33.">
    <original>R</original>
    <variation>K</variation>
    <location>
        <position position="336"/>
    </location>
</feature>
<feature type="sequence variant" description="In strain: A/WSN/33.">
    <original>V</original>
    <variation>M</variation>
    <location>
        <position position="373"/>
    </location>
</feature>
<feature type="sequence variant" description="In strain: A/WSN/33.">
    <original>R</original>
    <variation>L</variation>
    <location>
        <position position="414"/>
    </location>
</feature>
<feature type="sequence variant" description="In strain: A/NWS/33.">
    <original>R</original>
    <variation>Q</variation>
    <location>
        <position position="414"/>
    </location>
</feature>
<feature type="sequence variant" description="In strain: A/WSN/33.">
    <original>ET</original>
    <variation>DA</variation>
    <location>
        <begin position="418"/>
        <end position="419"/>
    </location>
</feature>
<feature type="sequence variant" description="In strain: A/WSN/33.">
    <original>S</original>
    <variation>G</variation>
    <location>
        <position position="434"/>
    </location>
</feature>
<feature type="sequence conflict" description="In Ref. 1; AAA43397." ref="1">
    <original>M</original>
    <variation>V</variation>
    <location>
        <position position="172"/>
    </location>
</feature>
<feature type="sequence conflict" description="In Ref. 1; AAA43397." ref="1">
    <original>MTD</original>
    <variation>ITN</variation>
    <location>
        <begin position="380"/>
        <end position="382"/>
    </location>
</feature>